<accession>A5VB94</accession>
<feature type="chain" id="PRO_0000330999" description="Glutamate--tRNA ligase 2">
    <location>
        <begin position="1"/>
        <end position="474"/>
    </location>
</feature>
<feature type="short sequence motif" description="'HIGH' region" evidence="1">
    <location>
        <begin position="16"/>
        <end position="26"/>
    </location>
</feature>
<feature type="short sequence motif" description="'KMSKS' region" evidence="1">
    <location>
        <begin position="245"/>
        <end position="249"/>
    </location>
</feature>
<feature type="binding site" evidence="1">
    <location>
        <position position="248"/>
    </location>
    <ligand>
        <name>ATP</name>
        <dbReference type="ChEBI" id="CHEBI:30616"/>
    </ligand>
</feature>
<proteinExistence type="inferred from homology"/>
<organism>
    <name type="scientific">Rhizorhabdus wittichii (strain DSM 6014 / CCUG 31198 / JCM 15750 / NBRC 105917 / EY 4224 / RW1)</name>
    <name type="common">Sphingomonas wittichii</name>
    <dbReference type="NCBI Taxonomy" id="392499"/>
    <lineage>
        <taxon>Bacteria</taxon>
        <taxon>Pseudomonadati</taxon>
        <taxon>Pseudomonadota</taxon>
        <taxon>Alphaproteobacteria</taxon>
        <taxon>Sphingomonadales</taxon>
        <taxon>Sphingomonadaceae</taxon>
        <taxon>Rhizorhabdus</taxon>
    </lineage>
</organism>
<gene>
    <name evidence="1" type="primary">gltX2</name>
    <name type="ordered locus">Swit_3213</name>
</gene>
<comment type="function">
    <text evidence="1">Catalyzes the attachment of glutamate to tRNA(Glu) in a two-step reaction: glutamate is first activated by ATP to form Glu-AMP and then transferred to the acceptor end of tRNA(Glu).</text>
</comment>
<comment type="catalytic activity">
    <reaction evidence="1">
        <text>tRNA(Glu) + L-glutamate + ATP = L-glutamyl-tRNA(Glu) + AMP + diphosphate</text>
        <dbReference type="Rhea" id="RHEA:23540"/>
        <dbReference type="Rhea" id="RHEA-COMP:9663"/>
        <dbReference type="Rhea" id="RHEA-COMP:9680"/>
        <dbReference type="ChEBI" id="CHEBI:29985"/>
        <dbReference type="ChEBI" id="CHEBI:30616"/>
        <dbReference type="ChEBI" id="CHEBI:33019"/>
        <dbReference type="ChEBI" id="CHEBI:78442"/>
        <dbReference type="ChEBI" id="CHEBI:78520"/>
        <dbReference type="ChEBI" id="CHEBI:456215"/>
        <dbReference type="EC" id="6.1.1.17"/>
    </reaction>
</comment>
<comment type="subunit">
    <text evidence="1">Monomer.</text>
</comment>
<comment type="subcellular location">
    <subcellularLocation>
        <location evidence="1">Cytoplasm</location>
    </subcellularLocation>
</comment>
<comment type="similarity">
    <text evidence="1">Belongs to the class-I aminoacyl-tRNA synthetase family. Glutamate--tRNA ligase type 1 subfamily.</text>
</comment>
<sequence>MGASMEKQTVVTRFAPSPTGFLHIGGARTALFNWLFARHHGGKFLLRIEDTDRARSTQEAIDAILDGMRWLDLGWDGEVVYQFARAERHAEVARELLANGHAYRCYATPEELAELREQQRAAKQPLRYDGRWRDRDPSEAPAGAPFVIRLKAPRTGEVTIDDQVQGPVTVQNAELDDMILLRSDGTPTYMLAVVVDDHDMGVTHVIRGDDHLNNAFRQLALIRAMGWEEPVYAHIPLIHGADGAKLSKRHGALGVDAYRDELGLLSEAVNNYLLRLGWGHGDDEIISREQAVEWFDLAGVGRSPSRFDFKKLENLNGHYMREADDARLADLIAPGVAARAGREFDSADHDLLLRSIPFLKVRAKDINELAEGASFLFRTRPLDMDEKAASLLDDPGKALLAQAREALAATDDWSALALEAGVRSVAERGGIGLGKVAQPLRAALTGRTTSPGIFDVLALLGREESLGRLDDQLG</sequence>
<protein>
    <recommendedName>
        <fullName evidence="1">Glutamate--tRNA ligase 2</fullName>
        <ecNumber evidence="1">6.1.1.17</ecNumber>
    </recommendedName>
    <alternativeName>
        <fullName evidence="1">Glutamyl-tRNA synthetase 2</fullName>
        <shortName evidence="1">GluRS 2</shortName>
    </alternativeName>
</protein>
<evidence type="ECO:0000255" key="1">
    <source>
        <dbReference type="HAMAP-Rule" id="MF_00022"/>
    </source>
</evidence>
<dbReference type="EC" id="6.1.1.17" evidence="1"/>
<dbReference type="EMBL" id="CP000699">
    <property type="protein sequence ID" value="ABQ69560.1"/>
    <property type="molecule type" value="Genomic_DNA"/>
</dbReference>
<dbReference type="SMR" id="A5VB94"/>
<dbReference type="STRING" id="392499.Swit_3213"/>
<dbReference type="PaxDb" id="392499-Swit_3213"/>
<dbReference type="KEGG" id="swi:Swit_3213"/>
<dbReference type="eggNOG" id="COG0008">
    <property type="taxonomic scope" value="Bacteria"/>
</dbReference>
<dbReference type="HOGENOM" id="CLU_015768_6_0_5"/>
<dbReference type="Proteomes" id="UP000001989">
    <property type="component" value="Chromosome"/>
</dbReference>
<dbReference type="GO" id="GO:0005829">
    <property type="term" value="C:cytosol"/>
    <property type="evidence" value="ECO:0007669"/>
    <property type="project" value="TreeGrafter"/>
</dbReference>
<dbReference type="GO" id="GO:0005524">
    <property type="term" value="F:ATP binding"/>
    <property type="evidence" value="ECO:0007669"/>
    <property type="project" value="UniProtKB-UniRule"/>
</dbReference>
<dbReference type="GO" id="GO:0004818">
    <property type="term" value="F:glutamate-tRNA ligase activity"/>
    <property type="evidence" value="ECO:0007669"/>
    <property type="project" value="UniProtKB-UniRule"/>
</dbReference>
<dbReference type="GO" id="GO:0000049">
    <property type="term" value="F:tRNA binding"/>
    <property type="evidence" value="ECO:0007669"/>
    <property type="project" value="InterPro"/>
</dbReference>
<dbReference type="GO" id="GO:0008270">
    <property type="term" value="F:zinc ion binding"/>
    <property type="evidence" value="ECO:0007669"/>
    <property type="project" value="InterPro"/>
</dbReference>
<dbReference type="GO" id="GO:0006424">
    <property type="term" value="P:glutamyl-tRNA aminoacylation"/>
    <property type="evidence" value="ECO:0007669"/>
    <property type="project" value="UniProtKB-UniRule"/>
</dbReference>
<dbReference type="CDD" id="cd00808">
    <property type="entry name" value="GluRS_core"/>
    <property type="match status" value="1"/>
</dbReference>
<dbReference type="FunFam" id="3.40.50.620:FF:000007">
    <property type="entry name" value="Glutamate--tRNA ligase"/>
    <property type="match status" value="1"/>
</dbReference>
<dbReference type="Gene3D" id="1.10.10.350">
    <property type="match status" value="1"/>
</dbReference>
<dbReference type="Gene3D" id="3.40.50.620">
    <property type="entry name" value="HUPs"/>
    <property type="match status" value="1"/>
</dbReference>
<dbReference type="HAMAP" id="MF_00022">
    <property type="entry name" value="Glu_tRNA_synth_type1"/>
    <property type="match status" value="1"/>
</dbReference>
<dbReference type="InterPro" id="IPR045462">
    <property type="entry name" value="aa-tRNA-synth_I_cd-bd"/>
</dbReference>
<dbReference type="InterPro" id="IPR020751">
    <property type="entry name" value="aa-tRNA-synth_I_codon-bd_sub2"/>
</dbReference>
<dbReference type="InterPro" id="IPR001412">
    <property type="entry name" value="aa-tRNA-synth_I_CS"/>
</dbReference>
<dbReference type="InterPro" id="IPR008925">
    <property type="entry name" value="aa_tRNA-synth_I_cd-bd_sf"/>
</dbReference>
<dbReference type="InterPro" id="IPR004527">
    <property type="entry name" value="Glu-tRNA-ligase_bac/mito"/>
</dbReference>
<dbReference type="InterPro" id="IPR000924">
    <property type="entry name" value="Glu/Gln-tRNA-synth"/>
</dbReference>
<dbReference type="InterPro" id="IPR020058">
    <property type="entry name" value="Glu/Gln-tRNA-synth_Ib_cat-dom"/>
</dbReference>
<dbReference type="InterPro" id="IPR049940">
    <property type="entry name" value="GluQ/Sye"/>
</dbReference>
<dbReference type="InterPro" id="IPR033910">
    <property type="entry name" value="GluRS_core"/>
</dbReference>
<dbReference type="InterPro" id="IPR014729">
    <property type="entry name" value="Rossmann-like_a/b/a_fold"/>
</dbReference>
<dbReference type="NCBIfam" id="TIGR00464">
    <property type="entry name" value="gltX_bact"/>
    <property type="match status" value="1"/>
</dbReference>
<dbReference type="PANTHER" id="PTHR43311">
    <property type="entry name" value="GLUTAMATE--TRNA LIGASE"/>
    <property type="match status" value="1"/>
</dbReference>
<dbReference type="PANTHER" id="PTHR43311:SF2">
    <property type="entry name" value="GLUTAMATE--TRNA LIGASE, MITOCHONDRIAL-RELATED"/>
    <property type="match status" value="1"/>
</dbReference>
<dbReference type="Pfam" id="PF19269">
    <property type="entry name" value="Anticodon_2"/>
    <property type="match status" value="1"/>
</dbReference>
<dbReference type="Pfam" id="PF00749">
    <property type="entry name" value="tRNA-synt_1c"/>
    <property type="match status" value="1"/>
</dbReference>
<dbReference type="PRINTS" id="PR00987">
    <property type="entry name" value="TRNASYNTHGLU"/>
</dbReference>
<dbReference type="SUPFAM" id="SSF48163">
    <property type="entry name" value="An anticodon-binding domain of class I aminoacyl-tRNA synthetases"/>
    <property type="match status" value="1"/>
</dbReference>
<dbReference type="SUPFAM" id="SSF52374">
    <property type="entry name" value="Nucleotidylyl transferase"/>
    <property type="match status" value="1"/>
</dbReference>
<dbReference type="PROSITE" id="PS00178">
    <property type="entry name" value="AA_TRNA_LIGASE_I"/>
    <property type="match status" value="1"/>
</dbReference>
<keyword id="KW-0030">Aminoacyl-tRNA synthetase</keyword>
<keyword id="KW-0067">ATP-binding</keyword>
<keyword id="KW-0963">Cytoplasm</keyword>
<keyword id="KW-0436">Ligase</keyword>
<keyword id="KW-0547">Nucleotide-binding</keyword>
<keyword id="KW-0648">Protein biosynthesis</keyword>
<keyword id="KW-1185">Reference proteome</keyword>
<reference key="1">
    <citation type="journal article" date="2010" name="J. Bacteriol.">
        <title>Genome sequence of the dioxin-mineralizing bacterium Sphingomonas wittichii RW1.</title>
        <authorList>
            <person name="Miller T.R."/>
            <person name="Delcher A.L."/>
            <person name="Salzberg S.L."/>
            <person name="Saunders E."/>
            <person name="Detter J.C."/>
            <person name="Halden R.U."/>
        </authorList>
    </citation>
    <scope>NUCLEOTIDE SEQUENCE [LARGE SCALE GENOMIC DNA]</scope>
    <source>
        <strain>DSM 6014 / CCUG 31198 / JCM 15750 / NBRC 105917 / EY 4224 / RW1</strain>
    </source>
</reference>
<name>SYE2_RHIWR</name>